<keyword id="KW-0963">Cytoplasm</keyword>
<keyword id="KW-0539">Nucleus</keyword>
<keyword id="KW-1185">Reference proteome</keyword>
<dbReference type="EMBL" id="DS232951">
    <property type="protein sequence ID" value="EDS26940.1"/>
    <property type="molecule type" value="Genomic_DNA"/>
</dbReference>
<dbReference type="RefSeq" id="XP_001868481.1">
    <property type="nucleotide sequence ID" value="XM_001868446.1"/>
</dbReference>
<dbReference type="SMR" id="B0XFQ9"/>
<dbReference type="FunCoup" id="B0XFQ9">
    <property type="interactions" value="186"/>
</dbReference>
<dbReference type="STRING" id="7176.B0XFQ9"/>
<dbReference type="EnsemblMetazoa" id="CPIJ017614-RA">
    <property type="protein sequence ID" value="CPIJ017614-PA"/>
    <property type="gene ID" value="CPIJ017614"/>
</dbReference>
<dbReference type="KEGG" id="cqu:CpipJ_CPIJ017614"/>
<dbReference type="VEuPathDB" id="VectorBase:CPIJ017614"/>
<dbReference type="VEuPathDB" id="VectorBase:CQUJHB007753"/>
<dbReference type="eggNOG" id="KOG2502">
    <property type="taxonomic scope" value="Eukaryota"/>
</dbReference>
<dbReference type="HOGENOM" id="CLU_028236_1_1_1"/>
<dbReference type="InParanoid" id="B0XFQ9"/>
<dbReference type="OMA" id="GYDGPMQ"/>
<dbReference type="OrthoDB" id="8775810at2759"/>
<dbReference type="PhylomeDB" id="B0XFQ9"/>
<dbReference type="Proteomes" id="UP000002320">
    <property type="component" value="Unassembled WGS sequence"/>
</dbReference>
<dbReference type="GO" id="GO:0005929">
    <property type="term" value="C:cilium"/>
    <property type="evidence" value="ECO:0007669"/>
    <property type="project" value="TreeGrafter"/>
</dbReference>
<dbReference type="GO" id="GO:0005737">
    <property type="term" value="C:cytoplasm"/>
    <property type="evidence" value="ECO:0000250"/>
    <property type="project" value="UniProtKB"/>
</dbReference>
<dbReference type="GO" id="GO:0005634">
    <property type="term" value="C:nucleus"/>
    <property type="evidence" value="ECO:0000250"/>
    <property type="project" value="UniProtKB"/>
</dbReference>
<dbReference type="GO" id="GO:0061512">
    <property type="term" value="P:protein localization to cilium"/>
    <property type="evidence" value="ECO:0007669"/>
    <property type="project" value="TreeGrafter"/>
</dbReference>
<dbReference type="FunFam" id="3.20.90.10:FF:000001">
    <property type="entry name" value="Tubby-like protein"/>
    <property type="match status" value="1"/>
</dbReference>
<dbReference type="Gene3D" id="3.20.90.10">
    <property type="entry name" value="Tubby Protein, Chain A"/>
    <property type="match status" value="1"/>
</dbReference>
<dbReference type="InterPro" id="IPR025659">
    <property type="entry name" value="Tubby-like_C"/>
</dbReference>
<dbReference type="InterPro" id="IPR000007">
    <property type="entry name" value="Tubby_C"/>
</dbReference>
<dbReference type="InterPro" id="IPR018066">
    <property type="entry name" value="Tubby_C_CS"/>
</dbReference>
<dbReference type="PANTHER" id="PTHR16517:SF7">
    <property type="entry name" value="PROTEIN KING TUBBY"/>
    <property type="match status" value="1"/>
</dbReference>
<dbReference type="PANTHER" id="PTHR16517">
    <property type="entry name" value="TUBBY-RELATED"/>
    <property type="match status" value="1"/>
</dbReference>
<dbReference type="Pfam" id="PF01167">
    <property type="entry name" value="Tub"/>
    <property type="match status" value="1"/>
</dbReference>
<dbReference type="PRINTS" id="PR01573">
    <property type="entry name" value="SUPERTUBBY"/>
</dbReference>
<dbReference type="SUPFAM" id="SSF54518">
    <property type="entry name" value="Tubby C-terminal domain-like"/>
    <property type="match status" value="1"/>
</dbReference>
<dbReference type="PROSITE" id="PS01200">
    <property type="entry name" value="TUB_1"/>
    <property type="match status" value="1"/>
</dbReference>
<dbReference type="PROSITE" id="PS01201">
    <property type="entry name" value="TUB_2"/>
    <property type="match status" value="1"/>
</dbReference>
<gene>
    <name type="primary">king-tubby1</name>
    <name type="ORF">CPIJ017614</name>
</gene>
<reference evidence="4" key="1">
    <citation type="submission" date="2007-03" db="EMBL/GenBank/DDBJ databases">
        <title>Annotation of Culex pipiens quinquefasciatus.</title>
        <authorList>
            <consortium name="The Broad Institute Genome Sequencing Platform"/>
            <person name="Atkinson P.W."/>
            <person name="Hemingway J."/>
            <person name="Christensen B.M."/>
            <person name="Higgs S."/>
            <person name="Kodira C.D."/>
            <person name="Hannick L.I."/>
            <person name="Megy K."/>
            <person name="O'Leary S.B."/>
            <person name="Pearson M."/>
            <person name="Haas B.J."/>
            <person name="Mauceli E."/>
            <person name="Wortman J.R."/>
            <person name="Lee N.H."/>
            <person name="Guigo R."/>
            <person name="Stanke M."/>
            <person name="Alvarado L."/>
            <person name="Amedeo P."/>
            <person name="Antoine C.H."/>
            <person name="Arensburger P."/>
            <person name="Bidwell S.L."/>
            <person name="Crawford M."/>
            <person name="Camaro F."/>
            <person name="Devon K."/>
            <person name="Engels R."/>
            <person name="Hammond M."/>
            <person name="Howarth C."/>
            <person name="Koehrsen M."/>
            <person name="Lawson D."/>
            <person name="Montgomery P."/>
            <person name="Nene V."/>
            <person name="Nusbaum C."/>
            <person name="Puiu D."/>
            <person name="Romero-Severson J."/>
            <person name="Severson D.W."/>
            <person name="Shumway M."/>
            <person name="Sisk P."/>
            <person name="Stolte C."/>
            <person name="Zeng Q."/>
            <person name="Eisenstadt E."/>
            <person name="Fraser-Liggett C.M."/>
            <person name="Strausberg R."/>
            <person name="Galagan J."/>
            <person name="Birren B."/>
            <person name="Collins F.H."/>
        </authorList>
    </citation>
    <scope>NUCLEOTIDE SEQUENCE [LARGE SCALE GENOMIC DNA]</scope>
    <source>
        <strain evidence="4">JHB</strain>
    </source>
</reference>
<feature type="chain" id="PRO_0000400831" description="Protein king tubby 1">
    <location>
        <begin position="1"/>
        <end position="427"/>
    </location>
</feature>
<feature type="region of interest" description="Disordered" evidence="3">
    <location>
        <begin position="48"/>
        <end position="174"/>
    </location>
</feature>
<feature type="compositionally biased region" description="Low complexity" evidence="3">
    <location>
        <begin position="57"/>
        <end position="86"/>
    </location>
</feature>
<name>TULP1_CULQU</name>
<evidence type="ECO:0000250" key="1">
    <source>
        <dbReference type="UniProtKB" id="Q86PC9"/>
    </source>
</evidence>
<evidence type="ECO:0000255" key="2"/>
<evidence type="ECO:0000256" key="3">
    <source>
        <dbReference type="SAM" id="MobiDB-lite"/>
    </source>
</evidence>
<evidence type="ECO:0000312" key="4">
    <source>
        <dbReference type="EMBL" id="EDS26940.1"/>
    </source>
</evidence>
<accession>B0XFQ9</accession>
<protein>
    <recommendedName>
        <fullName>Protein king tubby 1</fullName>
    </recommendedName>
</protein>
<comment type="subcellular location">
    <subcellularLocation>
        <location evidence="1">Cytoplasm</location>
    </subcellularLocation>
    <subcellularLocation>
        <location evidence="1">Nucleus</location>
    </subcellularLocation>
</comment>
<comment type="similarity">
    <text evidence="2">Belongs to the TUB family.</text>
</comment>
<organism>
    <name type="scientific">Culex quinquefasciatus</name>
    <name type="common">Southern house mosquito</name>
    <name type="synonym">Culex pungens</name>
    <dbReference type="NCBI Taxonomy" id="7176"/>
    <lineage>
        <taxon>Eukaryota</taxon>
        <taxon>Metazoa</taxon>
        <taxon>Ecdysozoa</taxon>
        <taxon>Arthropoda</taxon>
        <taxon>Hexapoda</taxon>
        <taxon>Insecta</taxon>
        <taxon>Pterygota</taxon>
        <taxon>Neoptera</taxon>
        <taxon>Endopterygota</taxon>
        <taxon>Diptera</taxon>
        <taxon>Nematocera</taxon>
        <taxon>Culicoidea</taxon>
        <taxon>Culicidae</taxon>
        <taxon>Culicinae</taxon>
        <taxon>Culicini</taxon>
        <taxon>Culex</taxon>
        <taxon>Culex</taxon>
    </lineage>
</organism>
<proteinExistence type="inferred from homology"/>
<sequence length="427" mass="47119">MEAYIRQKRATPGMVQASDLQLVRPMSAVNRNGREVHAYDGPMQFMMSPSNPDQIISSSGSPTTVTATGTGTTTTTGSVTTTPTSPYSDATLEKLTPSSQDSEDEESTPVDILPSSNSFDRHSDGHLTHSAPISPALNNNVSRDSQQDSGSSGNLKSMEHSSPQASGHNDAEGDVAGPIEQWVTQPAAQGVLYKCRITRDRKGMDRGLFPIYYLHLERDYGKRLFCLAGRKRKKSKTSNYIISCDPTDLSRQADGFVGKLRSNVFGTTFFVYDNGKKDDPVSPRLDLAVVIYDTNILGFKGPRNMTVLLPGMTEDDQRVKINSSDSHGQGLLDSWKSKHMDNVVELHNKTPIWNDETQSYVLNFHGRVTQASVKNFQLVHDSDPDYIVMQFGRTSDDIFTMDFRYPLCAFQAFAIALSSFDGKLACE</sequence>